<evidence type="ECO:0000255" key="1">
    <source>
        <dbReference type="HAMAP-Rule" id="MF_00664"/>
    </source>
</evidence>
<dbReference type="EC" id="4.1.1.65" evidence="1"/>
<dbReference type="EMBL" id="CP001227">
    <property type="protein sequence ID" value="ACR47201.1"/>
    <property type="molecule type" value="Genomic_DNA"/>
</dbReference>
<dbReference type="RefSeq" id="WP_012736485.1">
    <property type="nucleotide sequence ID" value="NC_012730.1"/>
</dbReference>
<dbReference type="SMR" id="C4K0V0"/>
<dbReference type="KEGG" id="rpk:RPR_01600"/>
<dbReference type="HOGENOM" id="CLU_072492_0_0_5"/>
<dbReference type="UniPathway" id="UPA00558">
    <property type="reaction ID" value="UER00616"/>
</dbReference>
<dbReference type="Proteomes" id="UP000005015">
    <property type="component" value="Chromosome"/>
</dbReference>
<dbReference type="GO" id="GO:0005886">
    <property type="term" value="C:plasma membrane"/>
    <property type="evidence" value="ECO:0007669"/>
    <property type="project" value="UniProtKB-SubCell"/>
</dbReference>
<dbReference type="GO" id="GO:0004609">
    <property type="term" value="F:phosphatidylserine decarboxylase activity"/>
    <property type="evidence" value="ECO:0007669"/>
    <property type="project" value="UniProtKB-UniRule"/>
</dbReference>
<dbReference type="GO" id="GO:0006646">
    <property type="term" value="P:phosphatidylethanolamine biosynthetic process"/>
    <property type="evidence" value="ECO:0007669"/>
    <property type="project" value="UniProtKB-UniRule"/>
</dbReference>
<dbReference type="HAMAP" id="MF_00664">
    <property type="entry name" value="PS_decarb_PSD_A"/>
    <property type="match status" value="1"/>
</dbReference>
<dbReference type="InterPro" id="IPR003817">
    <property type="entry name" value="PS_Dcarbxylase"/>
</dbReference>
<dbReference type="InterPro" id="IPR033175">
    <property type="entry name" value="PSD-A"/>
</dbReference>
<dbReference type="NCBIfam" id="NF003677">
    <property type="entry name" value="PRK05305.1-1"/>
    <property type="match status" value="1"/>
</dbReference>
<dbReference type="NCBIfam" id="NF003678">
    <property type="entry name" value="PRK05305.1-2"/>
    <property type="match status" value="1"/>
</dbReference>
<dbReference type="NCBIfam" id="NF003679">
    <property type="entry name" value="PRK05305.1-3"/>
    <property type="match status" value="1"/>
</dbReference>
<dbReference type="NCBIfam" id="NF003681">
    <property type="entry name" value="PRK05305.2-1"/>
    <property type="match status" value="1"/>
</dbReference>
<dbReference type="NCBIfam" id="NF003685">
    <property type="entry name" value="PRK05305.2-5"/>
    <property type="match status" value="1"/>
</dbReference>
<dbReference type="PANTHER" id="PTHR35809">
    <property type="entry name" value="ARCHAETIDYLSERINE DECARBOXYLASE PROENZYME-RELATED"/>
    <property type="match status" value="1"/>
</dbReference>
<dbReference type="PANTHER" id="PTHR35809:SF1">
    <property type="entry name" value="ARCHAETIDYLSERINE DECARBOXYLASE PROENZYME-RELATED"/>
    <property type="match status" value="1"/>
</dbReference>
<dbReference type="Pfam" id="PF02666">
    <property type="entry name" value="PS_Dcarbxylase"/>
    <property type="match status" value="1"/>
</dbReference>
<name>PSD_RICPU</name>
<organism>
    <name type="scientific">Rickettsia peacockii (strain Rustic)</name>
    <dbReference type="NCBI Taxonomy" id="562019"/>
    <lineage>
        <taxon>Bacteria</taxon>
        <taxon>Pseudomonadati</taxon>
        <taxon>Pseudomonadota</taxon>
        <taxon>Alphaproteobacteria</taxon>
        <taxon>Rickettsiales</taxon>
        <taxon>Rickettsiaceae</taxon>
        <taxon>Rickettsieae</taxon>
        <taxon>Rickettsia</taxon>
        <taxon>spotted fever group</taxon>
    </lineage>
</organism>
<proteinExistence type="inferred from homology"/>
<comment type="function">
    <text evidence="1">Catalyzes the formation of phosphatidylethanolamine (PtdEtn) from phosphatidylserine (PtdSer).</text>
</comment>
<comment type="catalytic activity">
    <reaction evidence="1">
        <text>a 1,2-diacyl-sn-glycero-3-phospho-L-serine + H(+) = a 1,2-diacyl-sn-glycero-3-phosphoethanolamine + CO2</text>
        <dbReference type="Rhea" id="RHEA:20828"/>
        <dbReference type="ChEBI" id="CHEBI:15378"/>
        <dbReference type="ChEBI" id="CHEBI:16526"/>
        <dbReference type="ChEBI" id="CHEBI:57262"/>
        <dbReference type="ChEBI" id="CHEBI:64612"/>
        <dbReference type="EC" id="4.1.1.65"/>
    </reaction>
</comment>
<comment type="cofactor">
    <cofactor evidence="1">
        <name>pyruvate</name>
        <dbReference type="ChEBI" id="CHEBI:15361"/>
    </cofactor>
    <text evidence="1">Binds 1 pyruvoyl group covalently per subunit.</text>
</comment>
<comment type="pathway">
    <text evidence="1">Phospholipid metabolism; phosphatidylethanolamine biosynthesis; phosphatidylethanolamine from CDP-diacylglycerol: step 2/2.</text>
</comment>
<comment type="subunit">
    <text evidence="1">Heterodimer of a large membrane-associated beta subunit and a small pyruvoyl-containing alpha subunit.</text>
</comment>
<comment type="subcellular location">
    <subcellularLocation>
        <location evidence="1">Cell membrane</location>
        <topology evidence="1">Peripheral membrane protein</topology>
    </subcellularLocation>
</comment>
<comment type="PTM">
    <text evidence="1">Is synthesized initially as an inactive proenzyme. Formation of the active enzyme involves a self-maturation process in which the active site pyruvoyl group is generated from an internal serine residue via an autocatalytic post-translational modification. Two non-identical subunits are generated from the proenzyme in this reaction, and the pyruvate is formed at the N-terminus of the alpha chain, which is derived from the carboxyl end of the proenzyme. The post-translation cleavage follows an unusual pathway, termed non-hydrolytic serinolysis, in which the side chain hydroxyl group of the serine supplies its oxygen atom to form the C-terminus of the beta chain, while the remainder of the serine residue undergoes an oxidative deamination to produce ammonia and the pyruvoyl prosthetic group on the alpha chain.</text>
</comment>
<comment type="similarity">
    <text evidence="1">Belongs to the phosphatidylserine decarboxylase family. PSD-A subfamily.</text>
</comment>
<keyword id="KW-1003">Cell membrane</keyword>
<keyword id="KW-0210">Decarboxylase</keyword>
<keyword id="KW-0444">Lipid biosynthesis</keyword>
<keyword id="KW-0443">Lipid metabolism</keyword>
<keyword id="KW-0456">Lyase</keyword>
<keyword id="KW-0472">Membrane</keyword>
<keyword id="KW-0594">Phospholipid biosynthesis</keyword>
<keyword id="KW-1208">Phospholipid metabolism</keyword>
<keyword id="KW-0670">Pyruvate</keyword>
<keyword id="KW-0865">Zymogen</keyword>
<protein>
    <recommendedName>
        <fullName evidence="1">Phosphatidylserine decarboxylase proenzyme</fullName>
        <ecNumber evidence="1">4.1.1.65</ecNumber>
    </recommendedName>
    <component>
        <recommendedName>
            <fullName evidence="1">Phosphatidylserine decarboxylase alpha chain</fullName>
        </recommendedName>
    </component>
    <component>
        <recommendedName>
            <fullName evidence="1">Phosphatidylserine decarboxylase beta chain</fullName>
        </recommendedName>
    </component>
</protein>
<reference key="1">
    <citation type="journal article" date="2009" name="PLoS ONE">
        <title>Genome sequence of the endosymbiont Rickettsia peacockii and comparison with virulent Rickettsia rickettsii: identification of virulence factors.</title>
        <authorList>
            <person name="Felsheim R.F."/>
            <person name="Kurtti T.J."/>
            <person name="Munderloh U.G."/>
        </authorList>
    </citation>
    <scope>NUCLEOTIDE SEQUENCE [LARGE SCALE GENOMIC DNA]</scope>
    <source>
        <strain>Rustic</strain>
    </source>
</reference>
<gene>
    <name evidence="1" type="primary">psd</name>
    <name type="ordered locus">RPR_01600</name>
</gene>
<sequence>MKQYNDLFKIIHREGYIFIASFALVSFLLASFNEKLGCIGCIATAWCIYFFRNPDRFVPISDDLVISPADGIIQEIKEALPPPELGLGDVEMIRVSIFLNIFNVHVNRIPANGKILALHYNPGKFFNASLDKASIYNERQSVLMETAQGQKIVFVQIAGLIARRIVCDLEEGNEVKTGERYGIIRFGSRVDVYLPLKTALLVSKGQTAIGGETIIADFGRKKTTEFKFDRK</sequence>
<accession>C4K0V0</accession>
<feature type="chain" id="PRO_1000212501" description="Phosphatidylserine decarboxylase beta chain" evidence="1">
    <location>
        <begin position="1"/>
        <end position="187"/>
    </location>
</feature>
<feature type="chain" id="PRO_1000212502" description="Phosphatidylserine decarboxylase alpha chain" evidence="1">
    <location>
        <begin position="188"/>
        <end position="231"/>
    </location>
</feature>
<feature type="active site" description="Schiff-base intermediate with substrate; via pyruvic acid" evidence="1">
    <location>
        <position position="188"/>
    </location>
</feature>
<feature type="site" description="Cleavage (non-hydrolytic); by autocatalysis" evidence="1">
    <location>
        <begin position="187"/>
        <end position="188"/>
    </location>
</feature>
<feature type="modified residue" description="Pyruvic acid (Ser); by autocatalysis" evidence="1">
    <location>
        <position position="188"/>
    </location>
</feature>